<dbReference type="EMBL" id="AF480466">
    <property type="protein sequence ID" value="AAM22955.1"/>
    <property type="status" value="ALT_INIT"/>
    <property type="molecule type" value="mRNA"/>
</dbReference>
<dbReference type="EMBL" id="AL355979">
    <property type="status" value="NOT_ANNOTATED_CDS"/>
    <property type="molecule type" value="Genomic_DNA"/>
</dbReference>
<dbReference type="EMBL" id="AL392104">
    <property type="status" value="NOT_ANNOTATED_CDS"/>
    <property type="molecule type" value="Genomic_DNA"/>
</dbReference>
<dbReference type="EMBL" id="AB037845">
    <property type="protein sequence ID" value="BAA92662.2"/>
    <property type="molecule type" value="mRNA"/>
</dbReference>
<dbReference type="EMBL" id="BX537570">
    <property type="protein sequence ID" value="CAD97787.1"/>
    <property type="molecule type" value="mRNA"/>
</dbReference>
<dbReference type="EMBL" id="AL834495">
    <property type="protein sequence ID" value="CAD39153.1"/>
    <property type="molecule type" value="mRNA"/>
</dbReference>
<dbReference type="EMBL" id="BC022931">
    <property type="protein sequence ID" value="AAH22931.1"/>
    <property type="molecule type" value="mRNA"/>
</dbReference>
<dbReference type="CCDS" id="CCDS7144.2">
    <molecule id="Q5T5U3-1"/>
</dbReference>
<dbReference type="PIR" id="A59438">
    <property type="entry name" value="A59438"/>
</dbReference>
<dbReference type="RefSeq" id="NP_001354377.1">
    <molecule id="Q5T5U3-1"/>
    <property type="nucleotide sequence ID" value="NM_001367448.1"/>
</dbReference>
<dbReference type="RefSeq" id="NP_001354383.1">
    <molecule id="Q5T5U3-1"/>
    <property type="nucleotide sequence ID" value="NM_001367454.1"/>
</dbReference>
<dbReference type="RefSeq" id="NP_065875.3">
    <molecule id="Q5T5U3-1"/>
    <property type="nucleotide sequence ID" value="NM_020824.4"/>
</dbReference>
<dbReference type="RefSeq" id="XP_005252599.1">
    <property type="nucleotide sequence ID" value="XM_005252542.3"/>
</dbReference>
<dbReference type="RefSeq" id="XP_016871948.1">
    <property type="nucleotide sequence ID" value="XM_017016459.1"/>
</dbReference>
<dbReference type="PDB" id="2DHJ">
    <property type="method" value="NMR"/>
    <property type="chains" value="A=931-1042"/>
</dbReference>
<dbReference type="PDB" id="2J59">
    <property type="method" value="X-ray"/>
    <property type="resolution" value="2.10 A"/>
    <property type="chains" value="M/N/O/P/Q/R=930-1097"/>
</dbReference>
<dbReference type="PDB" id="2YUY">
    <property type="method" value="NMR"/>
    <property type="chains" value="A=47-159"/>
</dbReference>
<dbReference type="PDBsum" id="2DHJ"/>
<dbReference type="PDBsum" id="2J59"/>
<dbReference type="PDBsum" id="2YUY"/>
<dbReference type="BMRB" id="Q5T5U3"/>
<dbReference type="SMR" id="Q5T5U3"/>
<dbReference type="BioGRID" id="121636">
    <property type="interactions" value="196"/>
</dbReference>
<dbReference type="FunCoup" id="Q5T5U3">
    <property type="interactions" value="1428"/>
</dbReference>
<dbReference type="IntAct" id="Q5T5U3">
    <property type="interactions" value="90"/>
</dbReference>
<dbReference type="MINT" id="Q5T5U3"/>
<dbReference type="STRING" id="9606.ENSP00000379709"/>
<dbReference type="GlyCosmos" id="Q5T5U3">
    <property type="glycosylation" value="1 site, 1 glycan"/>
</dbReference>
<dbReference type="GlyGen" id="Q5T5U3">
    <property type="glycosylation" value="8 sites, 1 O-linked glycan (7 sites)"/>
</dbReference>
<dbReference type="iPTMnet" id="Q5T5U3"/>
<dbReference type="PhosphoSitePlus" id="Q5T5U3"/>
<dbReference type="SwissPalm" id="Q5T5U3"/>
<dbReference type="BioMuta" id="ARHGAP21"/>
<dbReference type="DMDM" id="74745129"/>
<dbReference type="jPOST" id="Q5T5U3"/>
<dbReference type="MassIVE" id="Q5T5U3"/>
<dbReference type="PaxDb" id="9606-ENSP00000379709"/>
<dbReference type="PeptideAtlas" id="Q5T5U3"/>
<dbReference type="ProteomicsDB" id="64551">
    <molecule id="Q5T5U3-1"/>
</dbReference>
<dbReference type="ProteomicsDB" id="64552">
    <molecule id="Q5T5U3-3"/>
</dbReference>
<dbReference type="Pumba" id="Q5T5U3"/>
<dbReference type="Antibodypedia" id="51888">
    <property type="antibodies" value="31 antibodies from 14 providers"/>
</dbReference>
<dbReference type="DNASU" id="57584"/>
<dbReference type="Ensembl" id="ENST00000396432.7">
    <molecule id="Q5T5U3-1"/>
    <property type="protein sequence ID" value="ENSP00000379709.2"/>
    <property type="gene ID" value="ENSG00000107863.20"/>
</dbReference>
<dbReference type="GeneID" id="57584"/>
<dbReference type="KEGG" id="hsa:57584"/>
<dbReference type="MANE-Select" id="ENST00000396432.7">
    <property type="protein sequence ID" value="ENSP00000379709.2"/>
    <property type="RefSeq nucleotide sequence ID" value="NM_020824.4"/>
    <property type="RefSeq protein sequence ID" value="NP_065875.3"/>
</dbReference>
<dbReference type="UCSC" id="uc001isb.2">
    <molecule id="Q5T5U3-1"/>
    <property type="organism name" value="human"/>
</dbReference>
<dbReference type="AGR" id="HGNC:23725"/>
<dbReference type="CTD" id="57584"/>
<dbReference type="DisGeNET" id="57584"/>
<dbReference type="GeneCards" id="ARHGAP21"/>
<dbReference type="HGNC" id="HGNC:23725">
    <property type="gene designation" value="ARHGAP21"/>
</dbReference>
<dbReference type="HPA" id="ENSG00000107863">
    <property type="expression patterns" value="Low tissue specificity"/>
</dbReference>
<dbReference type="MIM" id="609870">
    <property type="type" value="gene"/>
</dbReference>
<dbReference type="neXtProt" id="NX_Q5T5U3"/>
<dbReference type="OpenTargets" id="ENSG00000107863"/>
<dbReference type="PharmGKB" id="PA134973559"/>
<dbReference type="VEuPathDB" id="HostDB:ENSG00000107863"/>
<dbReference type="eggNOG" id="KOG4407">
    <property type="taxonomic scope" value="Eukaryota"/>
</dbReference>
<dbReference type="GeneTree" id="ENSGT00940000155406"/>
<dbReference type="HOGENOM" id="CLU_001776_0_0_1"/>
<dbReference type="InParanoid" id="Q5T5U3"/>
<dbReference type="OMA" id="CEEEQPI"/>
<dbReference type="OrthoDB" id="6281275at2759"/>
<dbReference type="PAN-GO" id="Q5T5U3">
    <property type="GO annotations" value="1 GO annotation based on evolutionary models"/>
</dbReference>
<dbReference type="PhylomeDB" id="Q5T5U3"/>
<dbReference type="TreeFam" id="TF329345"/>
<dbReference type="PathwayCommons" id="Q5T5U3"/>
<dbReference type="Reactome" id="R-HSA-8980692">
    <property type="pathway name" value="RHOA GTPase cycle"/>
</dbReference>
<dbReference type="Reactome" id="R-HSA-9013026">
    <property type="pathway name" value="RHOB GTPase cycle"/>
</dbReference>
<dbReference type="Reactome" id="R-HSA-9013106">
    <property type="pathway name" value="RHOC GTPase cycle"/>
</dbReference>
<dbReference type="Reactome" id="R-HSA-9013148">
    <property type="pathway name" value="CDC42 GTPase cycle"/>
</dbReference>
<dbReference type="Reactome" id="R-HSA-9013149">
    <property type="pathway name" value="RAC1 GTPase cycle"/>
</dbReference>
<dbReference type="Reactome" id="R-HSA-9013404">
    <property type="pathway name" value="RAC2 GTPase cycle"/>
</dbReference>
<dbReference type="Reactome" id="R-HSA-9013405">
    <property type="pathway name" value="RHOD GTPase cycle"/>
</dbReference>
<dbReference type="Reactome" id="R-HSA-9013406">
    <property type="pathway name" value="RHOQ GTPase cycle"/>
</dbReference>
<dbReference type="Reactome" id="R-HSA-9013408">
    <property type="pathway name" value="RHOG GTPase cycle"/>
</dbReference>
<dbReference type="Reactome" id="R-HSA-9013409">
    <property type="pathway name" value="RHOJ GTPase cycle"/>
</dbReference>
<dbReference type="Reactome" id="R-HSA-9013423">
    <property type="pathway name" value="RAC3 GTPase cycle"/>
</dbReference>
<dbReference type="Reactome" id="R-HSA-9035034">
    <property type="pathway name" value="RHOF GTPase cycle"/>
</dbReference>
<dbReference type="Reactome" id="R-HSA-9696264">
    <property type="pathway name" value="RND3 GTPase cycle"/>
</dbReference>
<dbReference type="SignaLink" id="Q5T5U3"/>
<dbReference type="SIGNOR" id="Q5T5U3"/>
<dbReference type="BioGRID-ORCS" id="57584">
    <property type="hits" value="29 hits in 1161 CRISPR screens"/>
</dbReference>
<dbReference type="CD-CODE" id="FB4E32DD">
    <property type="entry name" value="Presynaptic clusters and postsynaptic densities"/>
</dbReference>
<dbReference type="ChiTaRS" id="ARHGAP21">
    <property type="organism name" value="human"/>
</dbReference>
<dbReference type="EvolutionaryTrace" id="Q5T5U3"/>
<dbReference type="GenomeRNAi" id="57584"/>
<dbReference type="Pharos" id="Q5T5U3">
    <property type="development level" value="Tbio"/>
</dbReference>
<dbReference type="PRO" id="PR:Q5T5U3"/>
<dbReference type="Proteomes" id="UP000005640">
    <property type="component" value="Chromosome 10"/>
</dbReference>
<dbReference type="RNAct" id="Q5T5U3">
    <property type="molecule type" value="protein"/>
</dbReference>
<dbReference type="Bgee" id="ENSG00000107863">
    <property type="expression patterns" value="Expressed in right hemisphere of cerebellum and 153 other cell types or tissues"/>
</dbReference>
<dbReference type="ExpressionAtlas" id="Q5T5U3">
    <property type="expression patterns" value="baseline and differential"/>
</dbReference>
<dbReference type="GO" id="GO:0015629">
    <property type="term" value="C:actin cytoskeleton"/>
    <property type="evidence" value="ECO:0000314"/>
    <property type="project" value="HPA"/>
</dbReference>
<dbReference type="GO" id="GO:0070161">
    <property type="term" value="C:anchoring junction"/>
    <property type="evidence" value="ECO:0007669"/>
    <property type="project" value="UniProtKB-SubCell"/>
</dbReference>
<dbReference type="GO" id="GO:0030054">
    <property type="term" value="C:cell junction"/>
    <property type="evidence" value="ECO:0000314"/>
    <property type="project" value="HPA"/>
</dbReference>
<dbReference type="GO" id="GO:0030659">
    <property type="term" value="C:cytoplasmic vesicle membrane"/>
    <property type="evidence" value="ECO:0007669"/>
    <property type="project" value="UniProtKB-SubCell"/>
</dbReference>
<dbReference type="GO" id="GO:0005829">
    <property type="term" value="C:cytosol"/>
    <property type="evidence" value="ECO:0000304"/>
    <property type="project" value="Reactome"/>
</dbReference>
<dbReference type="GO" id="GO:0005794">
    <property type="term" value="C:Golgi apparatus"/>
    <property type="evidence" value="ECO:0000314"/>
    <property type="project" value="BHF-UCL"/>
</dbReference>
<dbReference type="GO" id="GO:0000139">
    <property type="term" value="C:Golgi membrane"/>
    <property type="evidence" value="ECO:0007669"/>
    <property type="project" value="UniProtKB-SubCell"/>
</dbReference>
<dbReference type="GO" id="GO:0005886">
    <property type="term" value="C:plasma membrane"/>
    <property type="evidence" value="ECO:0000314"/>
    <property type="project" value="HPA"/>
</dbReference>
<dbReference type="GO" id="GO:0005096">
    <property type="term" value="F:GTPase activator activity"/>
    <property type="evidence" value="ECO:0000304"/>
    <property type="project" value="Reactome"/>
</dbReference>
<dbReference type="GO" id="GO:0051683">
    <property type="term" value="P:establishment of Golgi localization"/>
    <property type="evidence" value="ECO:0000314"/>
    <property type="project" value="BHF-UCL"/>
</dbReference>
<dbReference type="GO" id="GO:0051645">
    <property type="term" value="P:Golgi localization"/>
    <property type="evidence" value="ECO:0000318"/>
    <property type="project" value="GO_Central"/>
</dbReference>
<dbReference type="GO" id="GO:0007030">
    <property type="term" value="P:Golgi organization"/>
    <property type="evidence" value="ECO:0000315"/>
    <property type="project" value="BHF-UCL"/>
</dbReference>
<dbReference type="GO" id="GO:0051684">
    <property type="term" value="P:maintenance of Golgi location"/>
    <property type="evidence" value="ECO:0000315"/>
    <property type="project" value="BHF-UCL"/>
</dbReference>
<dbReference type="GO" id="GO:0072384">
    <property type="term" value="P:organelle transport along microtubule"/>
    <property type="evidence" value="ECO:0000315"/>
    <property type="project" value="BHF-UCL"/>
</dbReference>
<dbReference type="GO" id="GO:0051056">
    <property type="term" value="P:regulation of small GTPase mediated signal transduction"/>
    <property type="evidence" value="ECO:0000304"/>
    <property type="project" value="Reactome"/>
</dbReference>
<dbReference type="GO" id="GO:0007165">
    <property type="term" value="P:signal transduction"/>
    <property type="evidence" value="ECO:0007669"/>
    <property type="project" value="InterPro"/>
</dbReference>
<dbReference type="CDD" id="cd06756">
    <property type="entry name" value="PDZ_ARHGAP21_23-like"/>
    <property type="match status" value="1"/>
</dbReference>
<dbReference type="CDD" id="cd01253">
    <property type="entry name" value="PH_ARHGAP21-like"/>
    <property type="match status" value="1"/>
</dbReference>
<dbReference type="CDD" id="cd04395">
    <property type="entry name" value="RhoGAP_ARHGAP21"/>
    <property type="match status" value="1"/>
</dbReference>
<dbReference type="FunFam" id="1.10.555.10:FF:000014">
    <property type="entry name" value="Rho GTPase activating protein 21"/>
    <property type="match status" value="1"/>
</dbReference>
<dbReference type="FunFam" id="2.30.29.30:FF:000101">
    <property type="entry name" value="Rho GTPase activating protein 21"/>
    <property type="match status" value="1"/>
</dbReference>
<dbReference type="FunFam" id="2.30.42.10:FF:000066">
    <property type="entry name" value="Rho GTPase activating protein 21"/>
    <property type="match status" value="1"/>
</dbReference>
<dbReference type="Gene3D" id="1.20.5.220">
    <property type="match status" value="1"/>
</dbReference>
<dbReference type="Gene3D" id="2.30.42.10">
    <property type="match status" value="1"/>
</dbReference>
<dbReference type="Gene3D" id="2.30.29.30">
    <property type="entry name" value="Pleckstrin-homology domain (PH domain)/Phosphotyrosine-binding domain (PTB)"/>
    <property type="match status" value="1"/>
</dbReference>
<dbReference type="Gene3D" id="1.10.555.10">
    <property type="entry name" value="Rho GTPase activation protein"/>
    <property type="match status" value="1"/>
</dbReference>
<dbReference type="InterPro" id="IPR001478">
    <property type="entry name" value="PDZ"/>
</dbReference>
<dbReference type="InterPro" id="IPR041489">
    <property type="entry name" value="PDZ_6"/>
</dbReference>
<dbReference type="InterPro" id="IPR036034">
    <property type="entry name" value="PDZ_sf"/>
</dbReference>
<dbReference type="InterPro" id="IPR011993">
    <property type="entry name" value="PH-like_dom_sf"/>
</dbReference>
<dbReference type="InterPro" id="IPR001849">
    <property type="entry name" value="PH_domain"/>
</dbReference>
<dbReference type="InterPro" id="IPR008936">
    <property type="entry name" value="Rho_GTPase_activation_prot"/>
</dbReference>
<dbReference type="InterPro" id="IPR000198">
    <property type="entry name" value="RhoGAP_dom"/>
</dbReference>
<dbReference type="PANTHER" id="PTHR23175">
    <property type="entry name" value="PDZ DOMAIN-CONTAINING PROTEIN"/>
    <property type="match status" value="1"/>
</dbReference>
<dbReference type="PANTHER" id="PTHR23175:SF16">
    <property type="entry name" value="RHO GTPASE-ACTIVATING PROTEIN 21"/>
    <property type="match status" value="1"/>
</dbReference>
<dbReference type="Pfam" id="PF17820">
    <property type="entry name" value="PDZ_6"/>
    <property type="match status" value="1"/>
</dbReference>
<dbReference type="Pfam" id="PF00169">
    <property type="entry name" value="PH"/>
    <property type="match status" value="1"/>
</dbReference>
<dbReference type="Pfam" id="PF00620">
    <property type="entry name" value="RhoGAP"/>
    <property type="match status" value="1"/>
</dbReference>
<dbReference type="SMART" id="SM00228">
    <property type="entry name" value="PDZ"/>
    <property type="match status" value="1"/>
</dbReference>
<dbReference type="SMART" id="SM00233">
    <property type="entry name" value="PH"/>
    <property type="match status" value="1"/>
</dbReference>
<dbReference type="SMART" id="SM00324">
    <property type="entry name" value="RhoGAP"/>
    <property type="match status" value="1"/>
</dbReference>
<dbReference type="SUPFAM" id="SSF48350">
    <property type="entry name" value="GTPase activation domain, GAP"/>
    <property type="match status" value="1"/>
</dbReference>
<dbReference type="SUPFAM" id="SSF50156">
    <property type="entry name" value="PDZ domain-like"/>
    <property type="match status" value="1"/>
</dbReference>
<dbReference type="SUPFAM" id="SSF50729">
    <property type="entry name" value="PH domain-like"/>
    <property type="match status" value="1"/>
</dbReference>
<dbReference type="PROSITE" id="PS50106">
    <property type="entry name" value="PDZ"/>
    <property type="match status" value="1"/>
</dbReference>
<dbReference type="PROSITE" id="PS50003">
    <property type="entry name" value="PH_DOMAIN"/>
    <property type="match status" value="1"/>
</dbReference>
<dbReference type="PROSITE" id="PS50238">
    <property type="entry name" value="RHOGAP"/>
    <property type="match status" value="1"/>
</dbReference>
<reference key="1">
    <citation type="journal article" date="2002" name="Biochem. Biophys. Res. Commun.">
        <title>ARHGAP10, a novel human gene coding for a potentially cytoskeletal Rho-GTPase activating protein.</title>
        <authorList>
            <person name="Basseres D.S."/>
            <person name="Tizzei E.V."/>
            <person name="Duarte A.A.S."/>
            <person name="Costa F.F."/>
            <person name="Saad S.T.O."/>
        </authorList>
    </citation>
    <scope>NUCLEOTIDE SEQUENCE [MRNA] (ISOFORM 1)</scope>
    <scope>TISSUE SPECIFICITY</scope>
    <scope>INDUCTION</scope>
    <scope>VARIANT SER-713</scope>
    <source>
        <tissue>Brain</tissue>
    </source>
</reference>
<reference key="2">
    <citation type="journal article" date="2004" name="Nature">
        <title>The DNA sequence and comparative analysis of human chromosome 10.</title>
        <authorList>
            <person name="Deloukas P."/>
            <person name="Earthrowl M.E."/>
            <person name="Grafham D.V."/>
            <person name="Rubenfield M."/>
            <person name="French L."/>
            <person name="Steward C.A."/>
            <person name="Sims S.K."/>
            <person name="Jones M.C."/>
            <person name="Searle S."/>
            <person name="Scott C."/>
            <person name="Howe K."/>
            <person name="Hunt S.E."/>
            <person name="Andrews T.D."/>
            <person name="Gilbert J.G.R."/>
            <person name="Swarbreck D."/>
            <person name="Ashurst J.L."/>
            <person name="Taylor A."/>
            <person name="Battles J."/>
            <person name="Bird C.P."/>
            <person name="Ainscough R."/>
            <person name="Almeida J.P."/>
            <person name="Ashwell R.I.S."/>
            <person name="Ambrose K.D."/>
            <person name="Babbage A.K."/>
            <person name="Bagguley C.L."/>
            <person name="Bailey J."/>
            <person name="Banerjee R."/>
            <person name="Bates K."/>
            <person name="Beasley H."/>
            <person name="Bray-Allen S."/>
            <person name="Brown A.J."/>
            <person name="Brown J.Y."/>
            <person name="Burford D.C."/>
            <person name="Burrill W."/>
            <person name="Burton J."/>
            <person name="Cahill P."/>
            <person name="Camire D."/>
            <person name="Carter N.P."/>
            <person name="Chapman J.C."/>
            <person name="Clark S.Y."/>
            <person name="Clarke G."/>
            <person name="Clee C.M."/>
            <person name="Clegg S."/>
            <person name="Corby N."/>
            <person name="Coulson A."/>
            <person name="Dhami P."/>
            <person name="Dutta I."/>
            <person name="Dunn M."/>
            <person name="Faulkner L."/>
            <person name="Frankish A."/>
            <person name="Frankland J.A."/>
            <person name="Garner P."/>
            <person name="Garnett J."/>
            <person name="Gribble S."/>
            <person name="Griffiths C."/>
            <person name="Grocock R."/>
            <person name="Gustafson E."/>
            <person name="Hammond S."/>
            <person name="Harley J.L."/>
            <person name="Hart E."/>
            <person name="Heath P.D."/>
            <person name="Ho T.P."/>
            <person name="Hopkins B."/>
            <person name="Horne J."/>
            <person name="Howden P.J."/>
            <person name="Huckle E."/>
            <person name="Hynds C."/>
            <person name="Johnson C."/>
            <person name="Johnson D."/>
            <person name="Kana A."/>
            <person name="Kay M."/>
            <person name="Kimberley A.M."/>
            <person name="Kershaw J.K."/>
            <person name="Kokkinaki M."/>
            <person name="Laird G.K."/>
            <person name="Lawlor S."/>
            <person name="Lee H.M."/>
            <person name="Leongamornlert D.A."/>
            <person name="Laird G."/>
            <person name="Lloyd C."/>
            <person name="Lloyd D.M."/>
            <person name="Loveland J."/>
            <person name="Lovell J."/>
            <person name="McLaren S."/>
            <person name="McLay K.E."/>
            <person name="McMurray A."/>
            <person name="Mashreghi-Mohammadi M."/>
            <person name="Matthews L."/>
            <person name="Milne S."/>
            <person name="Nickerson T."/>
            <person name="Nguyen M."/>
            <person name="Overton-Larty E."/>
            <person name="Palmer S.A."/>
            <person name="Pearce A.V."/>
            <person name="Peck A.I."/>
            <person name="Pelan S."/>
            <person name="Phillimore B."/>
            <person name="Porter K."/>
            <person name="Rice C.M."/>
            <person name="Rogosin A."/>
            <person name="Ross M.T."/>
            <person name="Sarafidou T."/>
            <person name="Sehra H.K."/>
            <person name="Shownkeen R."/>
            <person name="Skuce C.D."/>
            <person name="Smith M."/>
            <person name="Standring L."/>
            <person name="Sycamore N."/>
            <person name="Tester J."/>
            <person name="Thorpe A."/>
            <person name="Torcasso W."/>
            <person name="Tracey A."/>
            <person name="Tromans A."/>
            <person name="Tsolas J."/>
            <person name="Wall M."/>
            <person name="Walsh J."/>
            <person name="Wang H."/>
            <person name="Weinstock K."/>
            <person name="West A.P."/>
            <person name="Willey D.L."/>
            <person name="Whitehead S.L."/>
            <person name="Wilming L."/>
            <person name="Wray P.W."/>
            <person name="Young L."/>
            <person name="Chen Y."/>
            <person name="Lovering R.C."/>
            <person name="Moschonas N.K."/>
            <person name="Siebert R."/>
            <person name="Fechtel K."/>
            <person name="Bentley D."/>
            <person name="Durbin R.M."/>
            <person name="Hubbard T."/>
            <person name="Doucette-Stamm L."/>
            <person name="Beck S."/>
            <person name="Smith D.R."/>
            <person name="Rogers J."/>
        </authorList>
    </citation>
    <scope>NUCLEOTIDE SEQUENCE [LARGE SCALE GENOMIC DNA]</scope>
</reference>
<reference key="3">
    <citation type="journal article" date="2000" name="DNA Res.">
        <title>Prediction of the coding sequences of unidentified human genes. XVI. The complete sequences of 150 new cDNA clones from brain which code for large proteins in vitro.</title>
        <authorList>
            <person name="Nagase T."/>
            <person name="Kikuno R."/>
            <person name="Ishikawa K."/>
            <person name="Hirosawa M."/>
            <person name="Ohara O."/>
        </authorList>
    </citation>
    <scope>NUCLEOTIDE SEQUENCE [LARGE SCALE MRNA] OF 15-1958 (ISOFORM 1)</scope>
    <source>
        <tissue>Brain</tissue>
    </source>
</reference>
<reference key="4">
    <citation type="journal article" date="2002" name="DNA Res.">
        <title>Construction of expression-ready cDNA clones for KIAA genes: manual curation of 330 KIAA cDNA clones.</title>
        <authorList>
            <person name="Nakajima D."/>
            <person name="Okazaki N."/>
            <person name="Yamakawa H."/>
            <person name="Kikuno R."/>
            <person name="Ohara O."/>
            <person name="Nagase T."/>
        </authorList>
    </citation>
    <scope>SEQUENCE REVISION</scope>
</reference>
<reference key="5">
    <citation type="journal article" date="2007" name="BMC Genomics">
        <title>The full-ORF clone resource of the German cDNA consortium.</title>
        <authorList>
            <person name="Bechtel S."/>
            <person name="Rosenfelder H."/>
            <person name="Duda A."/>
            <person name="Schmidt C.P."/>
            <person name="Ernst U."/>
            <person name="Wellenreuther R."/>
            <person name="Mehrle A."/>
            <person name="Schuster C."/>
            <person name="Bahr A."/>
            <person name="Bloecker H."/>
            <person name="Heubner D."/>
            <person name="Hoerlein A."/>
            <person name="Michel G."/>
            <person name="Wedler H."/>
            <person name="Koehrer K."/>
            <person name="Ottenwaelder B."/>
            <person name="Poustka A."/>
            <person name="Wiemann S."/>
            <person name="Schupp I."/>
        </authorList>
    </citation>
    <scope>NUCLEOTIDE SEQUENCE [LARGE SCALE MRNA] OF 162-1958 (ISOFORM 3)</scope>
    <scope>NUCLEOTIDE SEQUENCE [LARGE SCALE MRNA] OF 638-1958 (ISOFORM 1)</scope>
    <scope>VARIANT SER-713</scope>
    <source>
        <tissue>Amygdala</tissue>
        <tissue>Cervix</tissue>
    </source>
</reference>
<reference key="6">
    <citation type="journal article" date="2004" name="Genome Res.">
        <title>The status, quality, and expansion of the NIH full-length cDNA project: the Mammalian Gene Collection (MGC).</title>
        <authorList>
            <consortium name="The MGC Project Team"/>
        </authorList>
    </citation>
    <scope>NUCLEOTIDE SEQUENCE [LARGE SCALE MRNA] OF 1523-1958 (ISOFORM 1)</scope>
    <source>
        <tissue>Urinary bladder</tissue>
    </source>
</reference>
<reference key="7">
    <citation type="journal article" date="2004" name="Int. J. Oncol.">
        <title>Characterization of human ARHGAP10 gene in silico.</title>
        <authorList>
            <person name="Katoh M."/>
            <person name="Katoh M."/>
        </authorList>
    </citation>
    <scope>IDENTIFICATION</scope>
</reference>
<reference key="8">
    <citation type="journal article" date="2005" name="Nat. Cell Biol.">
        <title>Golgi-localized GAP for Cdc42 functions downstream of ARF1 to control Arp2/3 complex and F-actin dynamics.</title>
        <authorList>
            <person name="Dubois T."/>
            <person name="Paleotti O."/>
            <person name="Mironov A.A. Jr."/>
            <person name="Fraisier V."/>
            <person name="Stradal T.E.B."/>
            <person name="De Matteis M.A."/>
            <person name="Franco M."/>
            <person name="Chavrier P."/>
        </authorList>
    </citation>
    <scope>FUNCTION</scope>
    <scope>INTERACTION WITH ARF1 AND ARF6</scope>
    <scope>SUBCELLULAR LOCATION</scope>
    <scope>MUTAGENESIS OF ARG-1184</scope>
</reference>
<reference key="9">
    <citation type="journal article" date="2005" name="Nat. Cell Biol.">
        <title>ARHGAP10 is necessary for alpha-catenin recruitment at adherens junctions and for Listeria invasion.</title>
        <authorList>
            <person name="Sousa S."/>
            <person name="Cabanes D."/>
            <person name="Archambaud C."/>
            <person name="Colland F."/>
            <person name="Lemichez E."/>
            <person name="Popoff M."/>
            <person name="Boisson-Dupuis S."/>
            <person name="Gouin E."/>
            <person name="Lecuit M."/>
            <person name="Legrain P."/>
            <person name="Cossart P."/>
        </authorList>
    </citation>
    <scope>FUNCTION</scope>
    <scope>INTERACTION WITH CTNNA1</scope>
    <scope>SUBCELLULAR LOCATION</scope>
    <scope>MUTAGENESIS OF ARG-1184</scope>
</reference>
<reference key="10">
    <citation type="journal article" date="2006" name="Cell">
        <title>Global, in vivo, and site-specific phosphorylation dynamics in signaling networks.</title>
        <authorList>
            <person name="Olsen J.V."/>
            <person name="Blagoev B."/>
            <person name="Gnad F."/>
            <person name="Macek B."/>
            <person name="Kumar C."/>
            <person name="Mortensen P."/>
            <person name="Mann M."/>
        </authorList>
    </citation>
    <scope>IDENTIFICATION BY MASS SPECTROMETRY [LARGE SCALE ANALYSIS]</scope>
    <source>
        <tissue>Cervix carcinoma</tissue>
    </source>
</reference>
<reference key="11">
    <citation type="journal article" date="2006" name="J. Biol. Chem.">
        <title>Role of the Arf6 GDP/GTP cycle and Arf6 GTPase-activating proteins in actin remodeling and intracellular transport.</title>
        <authorList>
            <person name="Klein S."/>
            <person name="Franco M."/>
            <person name="Chardin P."/>
            <person name="Luton F."/>
        </authorList>
    </citation>
    <scope>INTERACTION WITH ARF6</scope>
</reference>
<reference key="12">
    <citation type="journal article" date="2006" name="Oncogene">
        <title>Head and neck squamous cell carcinoma transcriptome analysis by comprehensive validated differential display.</title>
        <authorList>
            <person name="Carles A."/>
            <person name="Millon R."/>
            <person name="Cromer A."/>
            <person name="Ganguli G."/>
            <person name="Lemaire F."/>
            <person name="Young J."/>
            <person name="Wasylyk C."/>
            <person name="Muller D."/>
            <person name="Schultz I."/>
            <person name="Rabouel Y."/>
            <person name="Dembele D."/>
            <person name="Zhao C."/>
            <person name="Marchal P."/>
            <person name="Ducray C."/>
            <person name="Bracco L."/>
            <person name="Abecassis J."/>
            <person name="Poch O."/>
            <person name="Wasylyk B."/>
        </authorList>
    </citation>
    <scope>IDENTIFICATION</scope>
</reference>
<reference key="13">
    <citation type="journal article" date="2008" name="J. Proteome Res.">
        <title>Combining protein-based IMAC, peptide-based IMAC, and MudPIT for efficient phosphoproteomic analysis.</title>
        <authorList>
            <person name="Cantin G.T."/>
            <person name="Yi W."/>
            <person name="Lu B."/>
            <person name="Park S.K."/>
            <person name="Xu T."/>
            <person name="Lee J.-D."/>
            <person name="Yates J.R. III"/>
        </authorList>
    </citation>
    <scope>IDENTIFICATION BY MASS SPECTROMETRY [LARGE SCALE ANALYSIS]</scope>
    <source>
        <tissue>Cervix carcinoma</tissue>
    </source>
</reference>
<reference key="14">
    <citation type="journal article" date="2008" name="Proc. Natl. Acad. Sci. U.S.A.">
        <title>A quantitative atlas of mitotic phosphorylation.</title>
        <authorList>
            <person name="Dephoure N."/>
            <person name="Zhou C."/>
            <person name="Villen J."/>
            <person name="Beausoleil S.A."/>
            <person name="Bakalarski C.E."/>
            <person name="Elledge S.J."/>
            <person name="Gygi S.P."/>
        </authorList>
    </citation>
    <scope>PHOSPHORYLATION [LARGE SCALE ANALYSIS] AT SER-459; SER-924 AND SER-1669</scope>
    <scope>IDENTIFICATION BY MASS SPECTROMETRY [LARGE SCALE ANALYSIS]</scope>
    <source>
        <tissue>Cervix carcinoma</tissue>
    </source>
</reference>
<reference key="15">
    <citation type="journal article" date="2009" name="Anal. Chem.">
        <title>Lys-N and trypsin cover complementary parts of the phosphoproteome in a refined SCX-based approach.</title>
        <authorList>
            <person name="Gauci S."/>
            <person name="Helbig A.O."/>
            <person name="Slijper M."/>
            <person name="Krijgsveld J."/>
            <person name="Heck A.J."/>
            <person name="Mohammed S."/>
        </authorList>
    </citation>
    <scope>IDENTIFICATION BY MASS SPECTROMETRY [LARGE SCALE ANALYSIS]</scope>
</reference>
<reference key="16">
    <citation type="journal article" date="2010" name="Sci. Signal.">
        <title>Quantitative phosphoproteomics reveals widespread full phosphorylation site occupancy during mitosis.</title>
        <authorList>
            <person name="Olsen J.V."/>
            <person name="Vermeulen M."/>
            <person name="Santamaria A."/>
            <person name="Kumar C."/>
            <person name="Miller M.L."/>
            <person name="Jensen L.J."/>
            <person name="Gnad F."/>
            <person name="Cox J."/>
            <person name="Jensen T.S."/>
            <person name="Nigg E.A."/>
            <person name="Brunak S."/>
            <person name="Mann M."/>
        </authorList>
    </citation>
    <scope>PHOSPHORYLATION [LARGE SCALE ANALYSIS] AT SER-57; SER-717; SER-857; SER-1432; SER-1433 AND SER-1527</scope>
    <scope>IDENTIFICATION BY MASS SPECTROMETRY [LARGE SCALE ANALYSIS]</scope>
    <source>
        <tissue>Cervix carcinoma</tissue>
    </source>
</reference>
<reference key="17">
    <citation type="journal article" date="2011" name="Sci. Signal.">
        <title>System-wide temporal characterization of the proteome and phosphoproteome of human embryonic stem cell differentiation.</title>
        <authorList>
            <person name="Rigbolt K.T."/>
            <person name="Prokhorova T.A."/>
            <person name="Akimov V."/>
            <person name="Henningsen J."/>
            <person name="Johansen P.T."/>
            <person name="Kratchmarova I."/>
            <person name="Kassem M."/>
            <person name="Mann M."/>
            <person name="Olsen J.V."/>
            <person name="Blagoev B."/>
        </authorList>
    </citation>
    <scope>IDENTIFICATION BY MASS SPECTROMETRY [LARGE SCALE ANALYSIS]</scope>
</reference>
<reference key="18">
    <citation type="journal article" date="2012" name="FEBS Lett.">
        <title>Post-translational modification of the RhoGTPase activating protein 21, ARHGAP21, by SUMO2/3.</title>
        <authorList>
            <person name="Bigarella C.L."/>
            <person name="Vieira Ferro K.P."/>
            <person name="Barcellos K.S."/>
            <person name="Martins-de-Souza D."/>
            <person name="Traina F."/>
            <person name="Novello J.C."/>
            <person name="Olalla Saad S.T."/>
            <person name="Archangelo L.F."/>
        </authorList>
    </citation>
    <scope>SUMOYLATION AT LYS-1444</scope>
</reference>
<reference key="19">
    <citation type="journal article" date="2013" name="J. Proteome Res.">
        <title>Toward a comprehensive characterization of a human cancer cell phosphoproteome.</title>
        <authorList>
            <person name="Zhou H."/>
            <person name="Di Palma S."/>
            <person name="Preisinger C."/>
            <person name="Peng M."/>
            <person name="Polat A.N."/>
            <person name="Heck A.J."/>
            <person name="Mohammed S."/>
        </authorList>
    </citation>
    <scope>PHOSPHORYLATION [LARGE SCALE ANALYSIS] AT SER-612; SER-616; SER-625; THR-747; SER-857; SER-881; SER-924; SER-954; SER-1115; SER-1418; SER-1432; SER-1433; SER-1504; SER-1527; SER-1669 AND SER-1742</scope>
    <scope>IDENTIFICATION BY MASS SPECTROMETRY [LARGE SCALE ANALYSIS]</scope>
    <source>
        <tissue>Cervix carcinoma</tissue>
        <tissue>Erythroleukemia</tissue>
    </source>
</reference>
<reference key="20">
    <citation type="journal article" date="2014" name="J. Proteomics">
        <title>An enzyme assisted RP-RPLC approach for in-depth analysis of human liver phosphoproteome.</title>
        <authorList>
            <person name="Bian Y."/>
            <person name="Song C."/>
            <person name="Cheng K."/>
            <person name="Dong M."/>
            <person name="Wang F."/>
            <person name="Huang J."/>
            <person name="Sun D."/>
            <person name="Wang L."/>
            <person name="Ye M."/>
            <person name="Zou H."/>
        </authorList>
    </citation>
    <scope>PHOSPHORYLATION [LARGE SCALE ANALYSIS] AT TYR-882 AND THR-1516</scope>
    <scope>IDENTIFICATION BY MASS SPECTROMETRY [LARGE SCALE ANALYSIS]</scope>
    <source>
        <tissue>Liver</tissue>
    </source>
</reference>
<reference key="21">
    <citation type="journal article" date="2014" name="Mol. Cell. Proteomics">
        <title>Immunoaffinity enrichment and mass spectrometry analysis of protein methylation.</title>
        <authorList>
            <person name="Guo A."/>
            <person name="Gu H."/>
            <person name="Zhou J."/>
            <person name="Mulhern D."/>
            <person name="Wang Y."/>
            <person name="Lee K.A."/>
            <person name="Yang V."/>
            <person name="Aguiar M."/>
            <person name="Kornhauser J."/>
            <person name="Jia X."/>
            <person name="Ren J."/>
            <person name="Beausoleil S.A."/>
            <person name="Silva J.C."/>
            <person name="Vemulapalli V."/>
            <person name="Bedford M.T."/>
            <person name="Comb M.J."/>
        </authorList>
    </citation>
    <scope>METHYLATION [LARGE SCALE ANALYSIS] AT ARG-554 AND ARG-575</scope>
    <scope>IDENTIFICATION BY MASS SPECTROMETRY [LARGE SCALE ANALYSIS]</scope>
    <source>
        <tissue>Colon carcinoma</tissue>
    </source>
</reference>
<reference key="22">
    <citation type="journal article" date="2007" name="EMBO J.">
        <title>Structural basis for ARF1-mediated recruitment of ARHGAP21 to Golgi membranes.</title>
        <authorList>
            <person name="Menetrey J."/>
            <person name="Perderiset M."/>
            <person name="Cicolari J."/>
            <person name="Dubois T."/>
            <person name="Elkhatib N."/>
            <person name="El Khadali F."/>
            <person name="Franco M."/>
            <person name="Chavrier P."/>
            <person name="Houdusse A."/>
        </authorList>
    </citation>
    <scope>X-RAY CRYSTALLOGRAPHY (2.1 ANGSTROMS) OF 930-1097 IN COMPLEX WITH ARF1</scope>
    <scope>MUTAGENESIS OF TYR-1000 AND ILE-1054</scope>
    <scope>SUBCELLULAR LOCATION</scope>
</reference>
<reference key="23">
    <citation type="submission" date="2006-09" db="PDB data bank">
        <title>Solution structure of the PH domain of Rho GTPase-activating protein 21 from human.</title>
        <authorList>
            <consortium name="RIKEN structural genomics initiative (RSGI)"/>
        </authorList>
    </citation>
    <scope>STRUCTURE BY NMR OF 931-1042</scope>
</reference>
<keyword id="KW-0002">3D-structure</keyword>
<keyword id="KW-0025">Alternative splicing</keyword>
<keyword id="KW-0965">Cell junction</keyword>
<keyword id="KW-0963">Cytoplasm</keyword>
<keyword id="KW-0968">Cytoplasmic vesicle</keyword>
<keyword id="KW-0206">Cytoskeleton</keyword>
<keyword id="KW-0333">Golgi apparatus</keyword>
<keyword id="KW-0343">GTPase activation</keyword>
<keyword id="KW-1017">Isopeptide bond</keyword>
<keyword id="KW-0472">Membrane</keyword>
<keyword id="KW-0488">Methylation</keyword>
<keyword id="KW-0597">Phosphoprotein</keyword>
<keyword id="KW-1267">Proteomics identification</keyword>
<keyword id="KW-1185">Reference proteome</keyword>
<keyword id="KW-0832">Ubl conjugation</keyword>
<protein>
    <recommendedName>
        <fullName>Rho GTPase-activating protein 21</fullName>
    </recommendedName>
    <alternativeName>
        <fullName>Rho GTPase-activating protein 10</fullName>
    </alternativeName>
    <alternativeName>
        <fullName>Rho-type GTPase-activating protein 21</fullName>
    </alternativeName>
</protein>
<evidence type="ECO:0000250" key="1">
    <source>
        <dbReference type="UniProtKB" id="Q6DFV3"/>
    </source>
</evidence>
<evidence type="ECO:0000255" key="2">
    <source>
        <dbReference type="PROSITE-ProRule" id="PRU00143"/>
    </source>
</evidence>
<evidence type="ECO:0000255" key="3">
    <source>
        <dbReference type="PROSITE-ProRule" id="PRU00145"/>
    </source>
</evidence>
<evidence type="ECO:0000255" key="4">
    <source>
        <dbReference type="PROSITE-ProRule" id="PRU00172"/>
    </source>
</evidence>
<evidence type="ECO:0000256" key="5">
    <source>
        <dbReference type="SAM" id="MobiDB-lite"/>
    </source>
</evidence>
<evidence type="ECO:0000269" key="6">
    <source>
    </source>
</evidence>
<evidence type="ECO:0000269" key="7">
    <source>
    </source>
</evidence>
<evidence type="ECO:0000269" key="8">
    <source>
    </source>
</evidence>
<evidence type="ECO:0000269" key="9">
    <source>
    </source>
</evidence>
<evidence type="ECO:0000269" key="10">
    <source>
    </source>
</evidence>
<evidence type="ECO:0000269" key="11">
    <source>
    </source>
</evidence>
<evidence type="ECO:0000269" key="12">
    <source>
    </source>
</evidence>
<evidence type="ECO:0000303" key="13">
    <source>
    </source>
</evidence>
<evidence type="ECO:0000305" key="14"/>
<evidence type="ECO:0007744" key="15">
    <source>
    </source>
</evidence>
<evidence type="ECO:0007744" key="16">
    <source>
    </source>
</evidence>
<evidence type="ECO:0007744" key="17">
    <source>
    </source>
</evidence>
<evidence type="ECO:0007744" key="18">
    <source>
    </source>
</evidence>
<evidence type="ECO:0007744" key="19">
    <source>
    </source>
</evidence>
<evidence type="ECO:0007829" key="20">
    <source>
        <dbReference type="PDB" id="2DHJ"/>
    </source>
</evidence>
<evidence type="ECO:0007829" key="21">
    <source>
        <dbReference type="PDB" id="2J59"/>
    </source>
</evidence>
<evidence type="ECO:0007829" key="22">
    <source>
        <dbReference type="PDB" id="2YUY"/>
    </source>
</evidence>
<comment type="function">
    <text evidence="7 8">Functions as a GTPase-activating protein (GAP) for RHOA and CDC42. Downstream partner of ARF1 which may control Golgi apparatus structure and function. Also required for CTNNA1 recruitment to adherens junctions.</text>
</comment>
<comment type="subunit">
    <text evidence="7 8 9 10">Interacts with GTP-bound ARF1 and ARF6. Interacts with CTNNA1.</text>
</comment>
<comment type="interaction">
    <interactant intactId="EBI-1642518">
        <id>Q5T5U3</id>
    </interactant>
    <interactant intactId="EBI-358607">
        <id>P29692</id>
        <label>EEF1D</label>
    </interactant>
    <organismsDiffer>false</organismsDiffer>
    <experiments>2</experiments>
</comment>
<comment type="interaction">
    <interactant intactId="EBI-1642518">
        <id>Q5T5U3</id>
    </interactant>
    <interactant intactId="EBI-476295">
        <id>P31947</id>
        <label>SFN</label>
    </interactant>
    <organismsDiffer>false</organismsDiffer>
    <experiments>4</experiments>
</comment>
<comment type="interaction">
    <interactant intactId="EBI-1642518">
        <id>Q5T5U3</id>
    </interactant>
    <interactant intactId="EBI-347088">
        <id>P63104</id>
        <label>YWHAZ</label>
    </interactant>
    <organismsDiffer>false</organismsDiffer>
    <experiments>5</experiments>
</comment>
<comment type="interaction">
    <interactant intactId="EBI-1642518">
        <id>Q5T5U3</id>
    </interactant>
    <interactant intactId="EBI-2308190">
        <id>P84078</id>
        <label>Arf1</label>
    </interactant>
    <organismsDiffer>true</organismsDiffer>
    <experiments>3</experiments>
</comment>
<comment type="subcellular location">
    <subcellularLocation>
        <location>Golgi apparatus membrane</location>
        <topology>Peripheral membrane protein</topology>
    </subcellularLocation>
    <subcellularLocation>
        <location>Cell junction</location>
    </subcellularLocation>
    <subcellularLocation>
        <location>Cytoplasmic vesicle membrane</location>
        <topology>Peripheral membrane protein</topology>
    </subcellularLocation>
    <subcellularLocation>
        <location>Cytoplasm</location>
        <location>Cytoskeleton</location>
    </subcellularLocation>
    <text>Localization to the Golgi is dependent on interaction with GTP-bound ARF1.</text>
</comment>
<comment type="alternative products">
    <event type="alternative splicing"/>
    <isoform>
        <id>Q5T5U3-1</id>
        <name>1</name>
        <sequence type="displayed"/>
    </isoform>
    <isoform>
        <id>Q5T5U3-3</id>
        <name>3</name>
        <sequence type="described" ref="VSP_028298 VSP_028300 VSP_028301"/>
    </isoform>
</comment>
<comment type="tissue specificity">
    <text evidence="6">Widely expressed with higher expression in brain, heart, skeletal muscle and placenta.</text>
</comment>
<comment type="induction">
    <text evidence="6">Up-regulated upon cell differentiation.</text>
</comment>
<comment type="PTM">
    <text evidence="12">Sumoylated with SUMO2 and SUMO3 in proliferating lymphocytes.</text>
</comment>
<comment type="miscellaneous">
    <text>Depletion of ARHGAP21 induces cell spreading and accumulation of F-actin stress fibers.</text>
</comment>
<comment type="miscellaneous">
    <text>Required for In1A-dependent entry of Listeria monocytogenes into cells.</text>
</comment>
<comment type="caution">
    <text evidence="14">It is uncertain whether Met-1 or Met-2 is the initiator.</text>
</comment>
<comment type="sequence caution" evidence="14">
    <conflict type="erroneous initiation">
        <sequence resource="EMBL-CDS" id="AAM22955"/>
    </conflict>
    <text>Truncated N-terminus.</text>
</comment>
<gene>
    <name type="primary">ARHGAP21</name>
    <name type="synonym">ARHGAP10</name>
    <name type="synonym">KIAA1424</name>
</gene>
<accession>Q5T5U3</accession>
<accession>Q0VF98</accession>
<accession>Q7Z3P7</accession>
<accession>Q8N3A2</accession>
<accession>Q8NI19</accession>
<accession>Q8TBV5</accession>
<accession>Q9P2C3</accession>
<organism>
    <name type="scientific">Homo sapiens</name>
    <name type="common">Human</name>
    <dbReference type="NCBI Taxonomy" id="9606"/>
    <lineage>
        <taxon>Eukaryota</taxon>
        <taxon>Metazoa</taxon>
        <taxon>Chordata</taxon>
        <taxon>Craniata</taxon>
        <taxon>Vertebrata</taxon>
        <taxon>Euteleostomi</taxon>
        <taxon>Mammalia</taxon>
        <taxon>Eutheria</taxon>
        <taxon>Euarchontoglires</taxon>
        <taxon>Primates</taxon>
        <taxon>Haplorrhini</taxon>
        <taxon>Catarrhini</taxon>
        <taxon>Hominidae</taxon>
        <taxon>Homo</taxon>
    </lineage>
</organism>
<sequence length="1958" mass="217462">MMATRRTGLSEGDGDKLKACEVSKNKDGKEQSETVSLSEDETFSWPGPKTVTLKRTSQGFGFTLRHFIVYPPESAIQFSYKDEENGNRGGKQRNRLEPMDTIFVKQVKEGGPAFEAGLCTGDRIIKVNGESVIGKTYSQVIALIQNSDTTLELSVMPKDEDILQVLQFTKDVTALAYSQDAYLKGNEAYSGNARNIPEPPPICYPWLPSAPSAMAQPVEISPPDSSLSKQQTSTPVLTQPGRAYRMEIQVPPSPTDVAKSNTAVCVCNESVRTVIVPSEKVVDLLSNRNNHTGPSHRTEEVRYGVSEQTSLKTVSRTTSPPLSIPTTHLIHQPAGSRSLEPSGILLKSGNYSGHSDGISSSRSQAVEAPSVSVNHYSPNSHQHIDWKNYKTYKEYIDNRRLHIGCRTIQERLDSLRAASQSTTDYNQVVPNRTTLQGRRRSTSHDRVPQSVQIRQRSVSQERLEDSVLMKYCPRSASQGALTSPSVSFSNHRTRSWDYIEGQDETLENVNSGTPIPDSNGEKKQTYKWSGFTEQDDRRGICERPRQQEIHKSFRGSNFTVAPSVVNSDNRRMSGRGVGSVSQFKKIPPDLKTLQSNRNFQTTCGMSLPRGISQDRSPLVKVRSNSLKAPSTHVTKPSFSQKSFVSIKDQRPVNHLHQNSLLNQQTWVRTDSAPDQQVETGKSPSLSGASAKPAPQSSENAGTSDLELPVSQRNQDLSLQEAETEQSDTLDNKEAVILREKPPSGRQTPQPLRHQSYILAVNDQETGSDTTCWLPNDARREVHIKRMEERKASSTSPPGDSLASIPFIDEPTSPSIDHDIAHIPASAVISASTSQVPSIATVPPCLTTSAPLIRRQLSHDHESVGPPSLDAQPNSKTERSKSYDEGLDDYREDAKLSFKHVSSLKGIKIADSQKSSEDSGSRKDSSSEVFSDAAKEGWLHFRPLVTDKGKRVGGSIRPWKQMYVVLRGHSLYLYKDKREQTTPSEEEQPISVNACLIDISYSETKRKNVFRLTTSDCECLFQAEDRDDMLAWIKTIQESSNLNEEDTGVTNRDLISRRIKEYNNLMSKAEQLPKTPRQSLSIRQTLLGAKSEPKTQSPHSPKEESERKLLSKDDTSPPKDKGTWRKGIPSIMRKTFEKKPTATGTFGVRLDDCPPAHTNRYIPLIVDICCKLVEERGLEYTGIYRVPGNNAAISSMQEELNKGMADIDIQDDKWRDLNVISSLLKSFFRKLPEPLFTNDKYADFIEANRKEDPLDRLKTLKRLIHDLPEHHYETLKFLSAHLKTVAENSEKNKMEPRNLAIVFGPTLVRTSEDNMTHMVTHMPDQYKIVETLIQHHDWFFTEEGAEEPLTTVQEESTVDSQPVPNIDHLLTNIGRTGVSPGDVSDSATSDSTKSKGSWGSGKDQYSRELLVSSIFAAASRKRKKPKEKAQPSSSEDELDNVFFKKENVEQCHNDTKEESKKESETLGRKQKIIIAKENSTRKDPSTTKDEKISLGKESTPSEEPSPPHNSKHNKSPTLSCRFAILKESPRSLLAQKSSHLEETGSDSGTLLSTSSQASLARFSMKKSTSPETKHSEFLANVSTITSDYSTTSSATYLTSLDSSRLSPEVQSVAESKGDEADDERSELISEGRPVETDSESEFPVFPTALTSERLFRGKLQEVTKSSRRNSEGSELSCTEGSLTSSLDSRRQLFSSHKLIECDTLSRKKSARFKSDSGSLGDAKNEKEAPSLTKVFDVMKKGKSTGSLLTPTRGESEKQEPTWKTKIADRLKLRPRAPADDMFGVGNHKVNAETAKRKSIRRRHTLGGHRDATEISVLNFWKVHEQSGERESELSAVNRLKPKCSAQDLSISDWLARERLRTSTSDLSRGEIGDPQTENPSTREIATTDTPLSLHCNTGSSSSTLASTNRPLLSIPPQSPDQINGESFQNVSKNASSAANAQPHKLSETPGSKAEFHPCL</sequence>
<feature type="chain" id="PRO_0000305245" description="Rho GTPase-activating protein 21">
    <location>
        <begin position="1"/>
        <end position="1958"/>
    </location>
</feature>
<feature type="domain" description="PDZ" evidence="2">
    <location>
        <begin position="50"/>
        <end position="159"/>
    </location>
</feature>
<feature type="domain" description="PH" evidence="3">
    <location>
        <begin position="931"/>
        <end position="1040"/>
    </location>
</feature>
<feature type="domain" description="Rho-GAP" evidence="4">
    <location>
        <begin position="1147"/>
        <end position="1339"/>
    </location>
</feature>
<feature type="region of interest" description="Disordered" evidence="5">
    <location>
        <begin position="1"/>
        <end position="42"/>
    </location>
</feature>
<feature type="region of interest" description="Disordered" evidence="5">
    <location>
        <begin position="286"/>
        <end position="325"/>
    </location>
</feature>
<feature type="region of interest" description="Disordered" evidence="5">
    <location>
        <begin position="418"/>
        <end position="458"/>
    </location>
</feature>
<feature type="region of interest" description="Disordered" evidence="5">
    <location>
        <begin position="659"/>
        <end position="751"/>
    </location>
</feature>
<feature type="region of interest" description="Disordered" evidence="5">
    <location>
        <begin position="859"/>
        <end position="885"/>
    </location>
</feature>
<feature type="region of interest" description="Interaction with ARF1 and ARF6" evidence="7">
    <location>
        <begin position="930"/>
        <end position="1097"/>
    </location>
</feature>
<feature type="region of interest" description="Disordered" evidence="5">
    <location>
        <begin position="1086"/>
        <end position="1133"/>
    </location>
</feature>
<feature type="region of interest" description="Disordered" evidence="5">
    <location>
        <begin position="1348"/>
        <end position="1401"/>
    </location>
</feature>
<feature type="region of interest" description="Disordered" evidence="5">
    <location>
        <begin position="1418"/>
        <end position="1575"/>
    </location>
</feature>
<feature type="region of interest" description="Interaction with CTNNA1" evidence="8">
    <location>
        <begin position="1592"/>
        <end position="1861"/>
    </location>
</feature>
<feature type="region of interest" description="Disordered" evidence="5">
    <location>
        <begin position="1598"/>
        <end position="1642"/>
    </location>
</feature>
<feature type="region of interest" description="Disordered" evidence="5">
    <location>
        <begin position="1655"/>
        <end position="1686"/>
    </location>
</feature>
<feature type="region of interest" description="Disordered" evidence="5">
    <location>
        <begin position="1860"/>
        <end position="1958"/>
    </location>
</feature>
<feature type="compositionally biased region" description="Basic and acidic residues" evidence="5">
    <location>
        <begin position="13"/>
        <end position="32"/>
    </location>
</feature>
<feature type="compositionally biased region" description="Polar residues" evidence="5">
    <location>
        <begin position="286"/>
        <end position="295"/>
    </location>
</feature>
<feature type="compositionally biased region" description="Polar residues" evidence="5">
    <location>
        <begin position="306"/>
        <end position="325"/>
    </location>
</feature>
<feature type="compositionally biased region" description="Polar residues" evidence="5">
    <location>
        <begin position="418"/>
        <end position="436"/>
    </location>
</feature>
<feature type="compositionally biased region" description="Low complexity" evidence="5">
    <location>
        <begin position="448"/>
        <end position="458"/>
    </location>
</feature>
<feature type="compositionally biased region" description="Polar residues" evidence="5">
    <location>
        <begin position="659"/>
        <end position="687"/>
    </location>
</feature>
<feature type="compositionally biased region" description="Basic and acidic residues" evidence="5">
    <location>
        <begin position="729"/>
        <end position="742"/>
    </location>
</feature>
<feature type="compositionally biased region" description="Basic and acidic residues" evidence="5">
    <location>
        <begin position="875"/>
        <end position="885"/>
    </location>
</feature>
<feature type="compositionally biased region" description="Basic and acidic residues" evidence="5">
    <location>
        <begin position="1099"/>
        <end position="1122"/>
    </location>
</feature>
<feature type="compositionally biased region" description="Polar residues" evidence="5">
    <location>
        <begin position="1349"/>
        <end position="1362"/>
    </location>
</feature>
<feature type="compositionally biased region" description="Low complexity" evidence="5">
    <location>
        <begin position="1383"/>
        <end position="1401"/>
    </location>
</feature>
<feature type="compositionally biased region" description="Basic and acidic residues" evidence="5">
    <location>
        <begin position="1441"/>
        <end position="1466"/>
    </location>
</feature>
<feature type="compositionally biased region" description="Basic and acidic residues" evidence="5">
    <location>
        <begin position="1477"/>
        <end position="1493"/>
    </location>
</feature>
<feature type="compositionally biased region" description="Low complexity" evidence="5">
    <location>
        <begin position="1544"/>
        <end position="1559"/>
    </location>
</feature>
<feature type="compositionally biased region" description="Polar residues" evidence="5">
    <location>
        <begin position="1603"/>
        <end position="1612"/>
    </location>
</feature>
<feature type="compositionally biased region" description="Basic and acidic residues" evidence="5">
    <location>
        <begin position="1624"/>
        <end position="1634"/>
    </location>
</feature>
<feature type="compositionally biased region" description="Polar residues" evidence="5">
    <location>
        <begin position="1671"/>
        <end position="1686"/>
    </location>
</feature>
<feature type="compositionally biased region" description="Polar residues" evidence="5">
    <location>
        <begin position="1874"/>
        <end position="1909"/>
    </location>
</feature>
<feature type="compositionally biased region" description="Polar residues" evidence="5">
    <location>
        <begin position="1918"/>
        <end position="1931"/>
    </location>
</feature>
<feature type="site" description="Arginine finger; crucial for GTP hydrolysis by stabilizing the transition state" evidence="4">
    <location>
        <position position="1184"/>
    </location>
</feature>
<feature type="modified residue" description="Phosphoserine" evidence="1">
    <location>
        <position position="36"/>
    </location>
</feature>
<feature type="modified residue" description="Phosphoserine" evidence="16">
    <location>
        <position position="57"/>
    </location>
</feature>
<feature type="modified residue" description="Phosphoserine" evidence="15">
    <location>
        <position position="459"/>
    </location>
</feature>
<feature type="modified residue" description="Omega-N-methylarginine" evidence="18">
    <location>
        <position position="554"/>
    </location>
</feature>
<feature type="modified residue" description="Omega-N-methylarginine" evidence="18">
    <location>
        <position position="575"/>
    </location>
</feature>
<feature type="modified residue" description="Phosphoserine" evidence="17">
    <location>
        <position position="612"/>
    </location>
</feature>
<feature type="modified residue" description="Phosphoserine" evidence="17">
    <location>
        <position position="616"/>
    </location>
</feature>
<feature type="modified residue" description="Phosphoserine" evidence="17">
    <location>
        <position position="625"/>
    </location>
</feature>
<feature type="modified residue" description="Phosphoserine" evidence="16">
    <location>
        <position position="717"/>
    </location>
</feature>
<feature type="modified residue" description="Phosphothreonine" evidence="17">
    <location>
        <position position="747"/>
    </location>
</feature>
<feature type="modified residue" description="Phosphoserine" evidence="16 17">
    <location>
        <position position="857"/>
    </location>
</feature>
<feature type="modified residue" description="Phosphoserine" evidence="1">
    <location>
        <position position="862"/>
    </location>
</feature>
<feature type="modified residue" description="Phosphoserine" evidence="17">
    <location>
        <position position="881"/>
    </location>
</feature>
<feature type="modified residue" description="Phosphotyrosine" evidence="19">
    <location>
        <position position="882"/>
    </location>
</feature>
<feature type="modified residue" description="Phosphoserine" evidence="15 17">
    <location>
        <position position="924"/>
    </location>
</feature>
<feature type="modified residue" description="Phosphoserine" evidence="1">
    <location>
        <position position="926"/>
    </location>
</feature>
<feature type="modified residue" description="Phosphoserine" evidence="17">
    <location>
        <position position="954"/>
    </location>
</feature>
<feature type="modified residue" description="Phosphoserine" evidence="1">
    <location>
        <position position="1099"/>
    </location>
</feature>
<feature type="modified residue" description="Phosphoserine" evidence="17">
    <location>
        <position position="1115"/>
    </location>
</feature>
<feature type="modified residue" description="Phosphoserine" evidence="17">
    <location>
        <position position="1418"/>
    </location>
</feature>
<feature type="modified residue" description="Phosphoserine" evidence="16 17">
    <location>
        <position position="1432"/>
    </location>
</feature>
<feature type="modified residue" description="Phosphoserine" evidence="16 17">
    <location>
        <position position="1433"/>
    </location>
</feature>
<feature type="modified residue" description="Phosphoserine" evidence="17">
    <location>
        <position position="1504"/>
    </location>
</feature>
<feature type="modified residue" description="Phosphothreonine" evidence="19">
    <location>
        <position position="1516"/>
    </location>
</feature>
<feature type="modified residue" description="Phosphoserine" evidence="16 17">
    <location>
        <position position="1527"/>
    </location>
</feature>
<feature type="modified residue" description="Phosphoserine" evidence="15 17">
    <location>
        <position position="1669"/>
    </location>
</feature>
<feature type="modified residue" description="Phosphothreonine" evidence="1">
    <location>
        <position position="1682"/>
    </location>
</feature>
<feature type="modified residue" description="Phosphoserine" evidence="17">
    <location>
        <position position="1742"/>
    </location>
</feature>
<feature type="modified residue" description="Phosphoserine" evidence="1">
    <location>
        <position position="1917"/>
    </location>
</feature>
<feature type="cross-link" description="Glycyl lysine isopeptide (Lys-Gly) (interchain with G-Cter in SUMO)" evidence="12">
    <location>
        <position position="1444"/>
    </location>
</feature>
<feature type="splice variant" id="VSP_028298" description="In isoform 3." evidence="13">
    <location>
        <begin position="166"/>
        <end position="175"/>
    </location>
</feature>
<feature type="splice variant" id="VSP_028300" description="In isoform 3." evidence="13">
    <original>YIPLIVDICCKLVEER</original>
    <variation>VGDTSPPDFLKSLIQF</variation>
    <location>
        <begin position="1160"/>
        <end position="1175"/>
    </location>
</feature>
<feature type="splice variant" id="VSP_028301" description="In isoform 3." evidence="13">
    <location>
        <begin position="1176"/>
        <end position="1958"/>
    </location>
</feature>
<feature type="sequence variant" id="VAR_035187" description="In dbSNP:rs3748222." evidence="6 11">
    <original>N</original>
    <variation>S</variation>
    <location>
        <position position="713"/>
    </location>
</feature>
<feature type="sequence variant" id="VAR_035188" description="In dbSNP:rs1133897.">
    <original>T</original>
    <variation>A</variation>
    <location>
        <position position="1594"/>
    </location>
</feature>
<feature type="sequence variant" id="VAR_035189" description="In dbSNP:rs1143051.">
    <original>V</original>
    <variation>A</variation>
    <location>
        <position position="1611"/>
    </location>
</feature>
<feature type="sequence variant" id="VAR_035190" description="In dbSNP:rs1143057.">
    <original>E</original>
    <variation>K</variation>
    <location>
        <position position="1629"/>
    </location>
</feature>
<feature type="sequence variant" id="VAR_035191" description="In dbSNP:rs1143075.">
    <original>A</original>
    <variation>T</variation>
    <location>
        <position position="1727"/>
    </location>
</feature>
<feature type="sequence variant" id="VAR_035192" description="In dbSNP:rs1127893.">
    <original>S</original>
    <variation>N</variation>
    <location>
        <position position="1950"/>
    </location>
</feature>
<feature type="mutagenesis site" description="Altered interaction with ARF1 and loss of association to membranes." evidence="10">
    <original>Y</original>
    <variation>A</variation>
    <location>
        <position position="1000"/>
    </location>
</feature>
<feature type="mutagenesis site" description="Altered interaction with ARF1 and loss of association to membranes." evidence="10">
    <original>I</original>
    <variation>A</variation>
    <location>
        <position position="1054"/>
    </location>
</feature>
<feature type="mutagenesis site" description="Loss of GTPase activity and loss of function." evidence="7 8">
    <original>R</original>
    <variation>A</variation>
    <location>
        <position position="1184"/>
    </location>
</feature>
<feature type="sequence conflict" description="In Ref. 1; AAM22955." evidence="14" ref="1">
    <original>S</original>
    <variation>N</variation>
    <location>
        <position position="306"/>
    </location>
</feature>
<feature type="sequence conflict" description="In Ref. 1; AAM22955." evidence="14" ref="1">
    <original>S</original>
    <variation>P</variation>
    <location>
        <position position="901"/>
    </location>
</feature>
<feature type="sequence conflict" description="In Ref. 1; AAM22955." evidence="14" ref="1">
    <original>V</original>
    <variation>A</variation>
    <location>
        <position position="1783"/>
    </location>
</feature>
<feature type="sequence conflict" description="In Ref. 1; AAM22955, 5; CAD39153 and 6; AAH22931." evidence="14" ref="1 5 6">
    <original>S</original>
    <variation>T</variation>
    <location>
        <position position="1950"/>
    </location>
</feature>
<feature type="strand" evidence="22">
    <location>
        <begin position="51"/>
        <end position="54"/>
    </location>
</feature>
<feature type="strand" evidence="22">
    <location>
        <begin position="57"/>
        <end position="59"/>
    </location>
</feature>
<feature type="strand" evidence="22">
    <location>
        <begin position="80"/>
        <end position="82"/>
    </location>
</feature>
<feature type="strand" evidence="22">
    <location>
        <begin position="109"/>
        <end position="111"/>
    </location>
</feature>
<feature type="helix" evidence="22">
    <location>
        <begin position="112"/>
        <end position="116"/>
    </location>
</feature>
<feature type="helix" evidence="22">
    <location>
        <begin position="137"/>
        <end position="145"/>
    </location>
</feature>
<feature type="strand" evidence="22">
    <location>
        <begin position="150"/>
        <end position="154"/>
    </location>
</feature>
<feature type="strand" evidence="21">
    <location>
        <begin position="934"/>
        <end position="944"/>
    </location>
</feature>
<feature type="strand" evidence="21">
    <location>
        <begin position="959"/>
        <end position="966"/>
    </location>
</feature>
<feature type="strand" evidence="21">
    <location>
        <begin position="969"/>
        <end position="974"/>
    </location>
</feature>
<feature type="strand" evidence="20">
    <location>
        <begin position="979"/>
        <end position="981"/>
    </location>
</feature>
<feature type="strand" evidence="20">
    <location>
        <begin position="984"/>
        <end position="986"/>
    </location>
</feature>
<feature type="strand" evidence="21">
    <location>
        <begin position="995"/>
        <end position="998"/>
    </location>
</feature>
<feature type="strand" evidence="21">
    <location>
        <begin position="1000"/>
        <end position="1002"/>
    </location>
</feature>
<feature type="strand" evidence="21">
    <location>
        <begin position="1006"/>
        <end position="1012"/>
    </location>
</feature>
<feature type="strand" evidence="21">
    <location>
        <begin position="1017"/>
        <end position="1021"/>
    </location>
</feature>
<feature type="helix" evidence="21">
    <location>
        <begin position="1025"/>
        <end position="1038"/>
    </location>
</feature>
<feature type="helix" evidence="21">
    <location>
        <begin position="1043"/>
        <end position="1063"/>
    </location>
</feature>
<proteinExistence type="evidence at protein level"/>
<name>RHG21_HUMAN</name>